<organism>
    <name type="scientific">Ephydatia muelleri</name>
    <name type="common">Mueller's freshwater sponge</name>
    <name type="synonym">Spongilla muelleri</name>
    <dbReference type="NCBI Taxonomy" id="6052"/>
    <lineage>
        <taxon>Eukaryota</taxon>
        <taxon>Metazoa</taxon>
        <taxon>Porifera</taxon>
        <taxon>Demospongiae</taxon>
        <taxon>Heteroscleromorpha</taxon>
        <taxon>Spongillida</taxon>
        <taxon>Spongillidae</taxon>
        <taxon>Ephydatia</taxon>
    </lineage>
</organism>
<accession>P18503</accession>
<name>CAS4_EPHMU</name>
<dbReference type="EMBL" id="X52598">
    <property type="protein sequence ID" value="CAA36831.1"/>
    <property type="molecule type" value="mRNA"/>
</dbReference>
<dbReference type="PIR" id="S11449">
    <property type="entry name" value="S11449"/>
</dbReference>
<dbReference type="GO" id="GO:0005581">
    <property type="term" value="C:collagen trimer"/>
    <property type="evidence" value="ECO:0007669"/>
    <property type="project" value="UniProtKB-KW"/>
</dbReference>
<dbReference type="GO" id="GO:0031012">
    <property type="term" value="C:extracellular matrix"/>
    <property type="evidence" value="ECO:0007669"/>
    <property type="project" value="TreeGrafter"/>
</dbReference>
<dbReference type="GO" id="GO:0005615">
    <property type="term" value="C:extracellular space"/>
    <property type="evidence" value="ECO:0007669"/>
    <property type="project" value="TreeGrafter"/>
</dbReference>
<dbReference type="InterPro" id="IPR008160">
    <property type="entry name" value="Collagen"/>
</dbReference>
<dbReference type="InterPro" id="IPR050149">
    <property type="entry name" value="Collagen_superfamily"/>
</dbReference>
<dbReference type="PANTHER" id="PTHR24023">
    <property type="entry name" value="COLLAGEN ALPHA"/>
    <property type="match status" value="1"/>
</dbReference>
<dbReference type="PANTHER" id="PTHR24023:SF1082">
    <property type="entry name" value="COLLAGEN TRIPLE HELIX REPEAT"/>
    <property type="match status" value="1"/>
</dbReference>
<dbReference type="Pfam" id="PF01391">
    <property type="entry name" value="Collagen"/>
    <property type="match status" value="1"/>
</dbReference>
<proteinExistence type="evidence at transcript level"/>
<sequence length="366" mass="35783">DTGPQGPQGVAGPPGIDGAKGDKGECFYPPPPTCPTCPAGPPGAPGPQGAPGAPGAPGLPGPAGPQGPKGDKGLPGNDGQPGAPGAPGYDGAKGDKGDTGAPGPQGPKGDQGPKGDQGYKGDAGLPGQPGQTGAPGKDGQDGAKGDKGDQGPAGTPGAPGKDGAQGPAGPAGPAGPAGPVGPTGPQGPQGPKGDVGPQGPQGAPGSNGAVVYIRWGNNVCPAGETNVYSGHIVESSNANDANGDYLCLPDTHNAYPPQTQNPLLNLKDVTDSYGKTVPCVACLASGRSTVFTFPDNTVCPYGWTTEYVGYEAANPKWPGQNLCVDTYFGDKLSQTPCNNLAVIAKGPLNAYSYQPQDVVSCVVCSI</sequence>
<evidence type="ECO:0000256" key="1">
    <source>
        <dbReference type="SAM" id="MobiDB-lite"/>
    </source>
</evidence>
<protein>
    <recommendedName>
        <fullName>Short-chain collagen C4</fullName>
    </recommendedName>
</protein>
<comment type="subcellular location">
    <subcellularLocation>
        <location>Secreted</location>
        <location>Extracellular space</location>
        <location>Extracellular matrix</location>
    </subcellularLocation>
</comment>
<feature type="chain" id="PRO_0000059393" description="Short-chain collagen C4">
    <location>
        <begin position="1" status="less than"/>
        <end position="366"/>
    </location>
</feature>
<feature type="region of interest" description="Disordered" evidence="1">
    <location>
        <begin position="1"/>
        <end position="207"/>
    </location>
</feature>
<feature type="region of interest" description="Triple-helical region">
    <location>
        <begin position="1"/>
        <end position="23"/>
    </location>
</feature>
<feature type="region of interest" description="Triple-helical region">
    <location>
        <begin position="40"/>
        <end position="210"/>
    </location>
</feature>
<feature type="compositionally biased region" description="Low complexity" evidence="1">
    <location>
        <begin position="1"/>
        <end position="14"/>
    </location>
</feature>
<feature type="compositionally biased region" description="Pro residues" evidence="1">
    <location>
        <begin position="28"/>
        <end position="45"/>
    </location>
</feature>
<feature type="compositionally biased region" description="Low complexity" evidence="1">
    <location>
        <begin position="75"/>
        <end position="90"/>
    </location>
</feature>
<feature type="compositionally biased region" description="Low complexity" evidence="1">
    <location>
        <begin position="99"/>
        <end position="110"/>
    </location>
</feature>
<feature type="compositionally biased region" description="Basic and acidic residues" evidence="1">
    <location>
        <begin position="138"/>
        <end position="149"/>
    </location>
</feature>
<feature type="compositionally biased region" description="Low complexity" evidence="1">
    <location>
        <begin position="150"/>
        <end position="168"/>
    </location>
</feature>
<feature type="compositionally biased region" description="Low complexity" evidence="1">
    <location>
        <begin position="189"/>
        <end position="201"/>
    </location>
</feature>
<feature type="non-terminal residue">
    <location>
        <position position="1"/>
    </location>
</feature>
<reference key="1">
    <citation type="journal article" date="1990" name="Eur. J. Biochem.">
        <title>Cloning and sequencing of a Porifera partial cDNA coding for a short-chain collagen.</title>
        <authorList>
            <person name="Exposito J.-Y."/>
            <person name="Ouazana R."/>
            <person name="Garrone R."/>
        </authorList>
    </citation>
    <scope>NUCLEOTIDE SEQUENCE [MRNA]</scope>
</reference>
<keyword id="KW-0176">Collagen</keyword>
<keyword id="KW-0272">Extracellular matrix</keyword>
<keyword id="KW-0379">Hydroxylation</keyword>
<keyword id="KW-0677">Repeat</keyword>
<keyword id="KW-0964">Secreted</keyword>